<dbReference type="EC" id="2.1.1.228" evidence="1"/>
<dbReference type="EMBL" id="CP001252">
    <property type="protein sequence ID" value="ACK47586.1"/>
    <property type="molecule type" value="Genomic_DNA"/>
</dbReference>
<dbReference type="RefSeq" id="WP_006080790.1">
    <property type="nucleotide sequence ID" value="NC_011663.1"/>
</dbReference>
<dbReference type="SMR" id="B8EBP1"/>
<dbReference type="KEGG" id="sbp:Sbal223_3101"/>
<dbReference type="HOGENOM" id="CLU_047363_0_1_6"/>
<dbReference type="Proteomes" id="UP000002507">
    <property type="component" value="Chromosome"/>
</dbReference>
<dbReference type="GO" id="GO:0005829">
    <property type="term" value="C:cytosol"/>
    <property type="evidence" value="ECO:0007669"/>
    <property type="project" value="TreeGrafter"/>
</dbReference>
<dbReference type="GO" id="GO:0052906">
    <property type="term" value="F:tRNA (guanine(37)-N1)-methyltransferase activity"/>
    <property type="evidence" value="ECO:0007669"/>
    <property type="project" value="UniProtKB-UniRule"/>
</dbReference>
<dbReference type="GO" id="GO:0002939">
    <property type="term" value="P:tRNA N1-guanine methylation"/>
    <property type="evidence" value="ECO:0007669"/>
    <property type="project" value="TreeGrafter"/>
</dbReference>
<dbReference type="CDD" id="cd18080">
    <property type="entry name" value="TrmD-like"/>
    <property type="match status" value="1"/>
</dbReference>
<dbReference type="FunFam" id="1.10.1270.20:FF:000001">
    <property type="entry name" value="tRNA (guanine-N(1)-)-methyltransferase"/>
    <property type="match status" value="1"/>
</dbReference>
<dbReference type="FunFam" id="3.40.1280.10:FF:000001">
    <property type="entry name" value="tRNA (guanine-N(1)-)-methyltransferase"/>
    <property type="match status" value="1"/>
</dbReference>
<dbReference type="Gene3D" id="3.40.1280.10">
    <property type="match status" value="1"/>
</dbReference>
<dbReference type="Gene3D" id="1.10.1270.20">
    <property type="entry name" value="tRNA(m1g37)methyltransferase, domain 2"/>
    <property type="match status" value="1"/>
</dbReference>
<dbReference type="HAMAP" id="MF_00605">
    <property type="entry name" value="TrmD"/>
    <property type="match status" value="1"/>
</dbReference>
<dbReference type="InterPro" id="IPR029028">
    <property type="entry name" value="Alpha/beta_knot_MTases"/>
</dbReference>
<dbReference type="InterPro" id="IPR023148">
    <property type="entry name" value="tRNA_m1G_MeTrfase_C_sf"/>
</dbReference>
<dbReference type="InterPro" id="IPR002649">
    <property type="entry name" value="tRNA_m1G_MeTrfase_TrmD"/>
</dbReference>
<dbReference type="InterPro" id="IPR029026">
    <property type="entry name" value="tRNA_m1G_MTases_N"/>
</dbReference>
<dbReference type="InterPro" id="IPR016009">
    <property type="entry name" value="tRNA_MeTrfase_TRMD/TRM10"/>
</dbReference>
<dbReference type="NCBIfam" id="NF000648">
    <property type="entry name" value="PRK00026.1"/>
    <property type="match status" value="1"/>
</dbReference>
<dbReference type="NCBIfam" id="TIGR00088">
    <property type="entry name" value="trmD"/>
    <property type="match status" value="1"/>
</dbReference>
<dbReference type="PANTHER" id="PTHR46417">
    <property type="entry name" value="TRNA (GUANINE-N(1)-)-METHYLTRANSFERASE"/>
    <property type="match status" value="1"/>
</dbReference>
<dbReference type="PANTHER" id="PTHR46417:SF1">
    <property type="entry name" value="TRNA (GUANINE-N(1)-)-METHYLTRANSFERASE"/>
    <property type="match status" value="1"/>
</dbReference>
<dbReference type="Pfam" id="PF01746">
    <property type="entry name" value="tRNA_m1G_MT"/>
    <property type="match status" value="1"/>
</dbReference>
<dbReference type="PIRSF" id="PIRSF000386">
    <property type="entry name" value="tRNA_mtase"/>
    <property type="match status" value="1"/>
</dbReference>
<dbReference type="SUPFAM" id="SSF75217">
    <property type="entry name" value="alpha/beta knot"/>
    <property type="match status" value="1"/>
</dbReference>
<feature type="chain" id="PRO_1000198583" description="tRNA (guanine-N(1)-)-methyltransferase">
    <location>
        <begin position="1"/>
        <end position="248"/>
    </location>
</feature>
<feature type="binding site" evidence="1">
    <location>
        <position position="113"/>
    </location>
    <ligand>
        <name>S-adenosyl-L-methionine</name>
        <dbReference type="ChEBI" id="CHEBI:59789"/>
    </ligand>
</feature>
<feature type="binding site" evidence="1">
    <location>
        <begin position="133"/>
        <end position="138"/>
    </location>
    <ligand>
        <name>S-adenosyl-L-methionine</name>
        <dbReference type="ChEBI" id="CHEBI:59789"/>
    </ligand>
</feature>
<proteinExistence type="inferred from homology"/>
<evidence type="ECO:0000255" key="1">
    <source>
        <dbReference type="HAMAP-Rule" id="MF_00605"/>
    </source>
</evidence>
<sequence length="248" mass="27426">MWLGVITLFPEMFRAVTDFGVTGRAVKNGLLELHTWNPRDFTHDRHNTVDDRPYGGGPGMLMMVQPLRDAIHAAKAAAGEGAKVIYLSPQGRKLDQQGVTELAQSSRLILVCGRYEGIDERIIQTEVDEEWSIGDYVLSGGELPAMTLIDSVSRLVPGVLGKQASAEQDSFSDGLLDCPHYTRPESLDGVDVPAVLLSGNHEQIRLWRLQQSLGRTLLRRPELLQNLALTDEQTTLLAQFVEAMNKHA</sequence>
<name>TRMD_SHEB2</name>
<protein>
    <recommendedName>
        <fullName evidence="1">tRNA (guanine-N(1)-)-methyltransferase</fullName>
        <ecNumber evidence="1">2.1.1.228</ecNumber>
    </recommendedName>
    <alternativeName>
        <fullName evidence="1">M1G-methyltransferase</fullName>
    </alternativeName>
    <alternativeName>
        <fullName evidence="1">tRNA [GM37] methyltransferase</fullName>
    </alternativeName>
</protein>
<accession>B8EBP1</accession>
<gene>
    <name evidence="1" type="primary">trmD</name>
    <name type="ordered locus">Sbal223_3101</name>
</gene>
<organism>
    <name type="scientific">Shewanella baltica (strain OS223)</name>
    <dbReference type="NCBI Taxonomy" id="407976"/>
    <lineage>
        <taxon>Bacteria</taxon>
        <taxon>Pseudomonadati</taxon>
        <taxon>Pseudomonadota</taxon>
        <taxon>Gammaproteobacteria</taxon>
        <taxon>Alteromonadales</taxon>
        <taxon>Shewanellaceae</taxon>
        <taxon>Shewanella</taxon>
    </lineage>
</organism>
<reference key="1">
    <citation type="submission" date="2008-12" db="EMBL/GenBank/DDBJ databases">
        <title>Complete sequence of chromosome of Shewanella baltica OS223.</title>
        <authorList>
            <consortium name="US DOE Joint Genome Institute"/>
            <person name="Lucas S."/>
            <person name="Copeland A."/>
            <person name="Lapidus A."/>
            <person name="Glavina del Rio T."/>
            <person name="Dalin E."/>
            <person name="Tice H."/>
            <person name="Bruce D."/>
            <person name="Goodwin L."/>
            <person name="Pitluck S."/>
            <person name="Chertkov O."/>
            <person name="Meincke L."/>
            <person name="Brettin T."/>
            <person name="Detter J.C."/>
            <person name="Han C."/>
            <person name="Kuske C.R."/>
            <person name="Larimer F."/>
            <person name="Land M."/>
            <person name="Hauser L."/>
            <person name="Kyrpides N."/>
            <person name="Ovchinnikova G."/>
            <person name="Brettar I."/>
            <person name="Rodrigues J."/>
            <person name="Konstantinidis K."/>
            <person name="Tiedje J."/>
        </authorList>
    </citation>
    <scope>NUCLEOTIDE SEQUENCE [LARGE SCALE GENOMIC DNA]</scope>
    <source>
        <strain>OS223</strain>
    </source>
</reference>
<comment type="function">
    <text evidence="1">Specifically methylates guanosine-37 in various tRNAs.</text>
</comment>
<comment type="catalytic activity">
    <reaction evidence="1">
        <text>guanosine(37) in tRNA + S-adenosyl-L-methionine = N(1)-methylguanosine(37) in tRNA + S-adenosyl-L-homocysteine + H(+)</text>
        <dbReference type="Rhea" id="RHEA:36899"/>
        <dbReference type="Rhea" id="RHEA-COMP:10145"/>
        <dbReference type="Rhea" id="RHEA-COMP:10147"/>
        <dbReference type="ChEBI" id="CHEBI:15378"/>
        <dbReference type="ChEBI" id="CHEBI:57856"/>
        <dbReference type="ChEBI" id="CHEBI:59789"/>
        <dbReference type="ChEBI" id="CHEBI:73542"/>
        <dbReference type="ChEBI" id="CHEBI:74269"/>
        <dbReference type="EC" id="2.1.1.228"/>
    </reaction>
</comment>
<comment type="subunit">
    <text evidence="1">Homodimer.</text>
</comment>
<comment type="subcellular location">
    <subcellularLocation>
        <location evidence="1">Cytoplasm</location>
    </subcellularLocation>
</comment>
<comment type="similarity">
    <text evidence="1">Belongs to the RNA methyltransferase TrmD family.</text>
</comment>
<keyword id="KW-0963">Cytoplasm</keyword>
<keyword id="KW-0489">Methyltransferase</keyword>
<keyword id="KW-0949">S-adenosyl-L-methionine</keyword>
<keyword id="KW-0808">Transferase</keyword>
<keyword id="KW-0819">tRNA processing</keyword>